<comment type="function">
    <text evidence="2">Plays a major role in protein secretion by helping the post-translocational extracellular folding of several secreted proteins.</text>
</comment>
<comment type="catalytic activity">
    <reaction evidence="2">
        <text>[protein]-peptidylproline (omega=180) = [protein]-peptidylproline (omega=0)</text>
        <dbReference type="Rhea" id="RHEA:16237"/>
        <dbReference type="Rhea" id="RHEA-COMP:10747"/>
        <dbReference type="Rhea" id="RHEA-COMP:10748"/>
        <dbReference type="ChEBI" id="CHEBI:83833"/>
        <dbReference type="ChEBI" id="CHEBI:83834"/>
        <dbReference type="EC" id="5.2.1.8"/>
    </reaction>
</comment>
<comment type="subcellular location">
    <subcellularLocation>
        <location evidence="2 4">Cell membrane</location>
        <topology evidence="2">Lipid-anchor</topology>
    </subcellularLocation>
    <subcellularLocation>
        <location evidence="4">Membrane raft</location>
        <topology evidence="1">Lipid-anchor</topology>
    </subcellularLocation>
    <text evidence="4">Present in detergent-resistant membrane (DRM) fractions that may be equivalent to eukaryotic membrane rafts; these rafts include proteins involved in signaling, molecule trafficking and protein secretion.</text>
</comment>
<comment type="similarity">
    <text evidence="2">Belongs to the PrsA family.</text>
</comment>
<accession>P60748</accession>
<accession>Q99T36</accession>
<dbReference type="EC" id="5.2.1.8" evidence="2"/>
<dbReference type="EMBL" id="BA000018">
    <property type="protein sequence ID" value="BAB42927.1"/>
    <property type="molecule type" value="Genomic_DNA"/>
</dbReference>
<dbReference type="PIR" id="H89970">
    <property type="entry name" value="H89970"/>
</dbReference>
<dbReference type="RefSeq" id="WP_000782121.1">
    <property type="nucleotide sequence ID" value="NC_002745.2"/>
</dbReference>
<dbReference type="SMR" id="P60748"/>
<dbReference type="EnsemblBacteria" id="BAB42927">
    <property type="protein sequence ID" value="BAB42927"/>
    <property type="gene ID" value="BAB42927"/>
</dbReference>
<dbReference type="KEGG" id="sau:SA1659"/>
<dbReference type="HOGENOM" id="CLU_034646_6_2_9"/>
<dbReference type="GO" id="GO:0045121">
    <property type="term" value="C:membrane raft"/>
    <property type="evidence" value="ECO:0007669"/>
    <property type="project" value="UniProtKB-SubCell"/>
</dbReference>
<dbReference type="GO" id="GO:0005886">
    <property type="term" value="C:plasma membrane"/>
    <property type="evidence" value="ECO:0007669"/>
    <property type="project" value="UniProtKB-SubCell"/>
</dbReference>
<dbReference type="GO" id="GO:0003755">
    <property type="term" value="F:peptidyl-prolyl cis-trans isomerase activity"/>
    <property type="evidence" value="ECO:0007669"/>
    <property type="project" value="UniProtKB-UniRule"/>
</dbReference>
<dbReference type="GO" id="GO:0006457">
    <property type="term" value="P:protein folding"/>
    <property type="evidence" value="ECO:0007669"/>
    <property type="project" value="UniProtKB-UniRule"/>
</dbReference>
<dbReference type="Gene3D" id="3.10.50.40">
    <property type="match status" value="1"/>
</dbReference>
<dbReference type="Gene3D" id="1.10.4030.10">
    <property type="entry name" value="Porin chaperone SurA, peptide-binding domain"/>
    <property type="match status" value="1"/>
</dbReference>
<dbReference type="HAMAP" id="MF_01145">
    <property type="entry name" value="Foldase_PrsA"/>
    <property type="match status" value="1"/>
</dbReference>
<dbReference type="InterPro" id="IPR023059">
    <property type="entry name" value="Foldase_PrsA"/>
</dbReference>
<dbReference type="InterPro" id="IPR046357">
    <property type="entry name" value="PPIase_dom_sf"/>
</dbReference>
<dbReference type="InterPro" id="IPR000297">
    <property type="entry name" value="PPIase_PpiC"/>
</dbReference>
<dbReference type="InterPro" id="IPR050245">
    <property type="entry name" value="PrsA_foldase"/>
</dbReference>
<dbReference type="InterPro" id="IPR027304">
    <property type="entry name" value="Trigger_fact/SurA_dom_sf"/>
</dbReference>
<dbReference type="PANTHER" id="PTHR47245:SF1">
    <property type="entry name" value="FOLDASE PROTEIN PRSA"/>
    <property type="match status" value="1"/>
</dbReference>
<dbReference type="PANTHER" id="PTHR47245">
    <property type="entry name" value="PEPTIDYLPROLYL ISOMERASE"/>
    <property type="match status" value="1"/>
</dbReference>
<dbReference type="Pfam" id="PF00639">
    <property type="entry name" value="Rotamase"/>
    <property type="match status" value="1"/>
</dbReference>
<dbReference type="SUPFAM" id="SSF54534">
    <property type="entry name" value="FKBP-like"/>
    <property type="match status" value="1"/>
</dbReference>
<dbReference type="SUPFAM" id="SSF109998">
    <property type="entry name" value="Triger factor/SurA peptide-binding domain-like"/>
    <property type="match status" value="1"/>
</dbReference>
<dbReference type="PROSITE" id="PS50198">
    <property type="entry name" value="PPIC_PPIASE_2"/>
    <property type="match status" value="1"/>
</dbReference>
<dbReference type="PROSITE" id="PS51257">
    <property type="entry name" value="PROKAR_LIPOPROTEIN"/>
    <property type="match status" value="1"/>
</dbReference>
<gene>
    <name evidence="2" type="primary">prsA</name>
    <name type="ordered locus">SA1659</name>
</gene>
<evidence type="ECO:0000255" key="1"/>
<evidence type="ECO:0000255" key="2">
    <source>
        <dbReference type="HAMAP-Rule" id="MF_01145"/>
    </source>
</evidence>
<evidence type="ECO:0000256" key="3">
    <source>
        <dbReference type="SAM" id="MobiDB-lite"/>
    </source>
</evidence>
<evidence type="ECO:0000269" key="4">
    <source>
    </source>
</evidence>
<feature type="signal peptide" evidence="2">
    <location>
        <begin position="1"/>
        <end position="20"/>
    </location>
</feature>
<feature type="chain" id="PRO_0000029319" description="Foldase protein PrsA">
    <location>
        <begin position="21"/>
        <end position="320"/>
    </location>
</feature>
<feature type="domain" description="PpiC" evidence="2">
    <location>
        <begin position="139"/>
        <end position="245"/>
    </location>
</feature>
<feature type="region of interest" description="Disordered" evidence="3">
    <location>
        <begin position="159"/>
        <end position="198"/>
    </location>
</feature>
<feature type="lipid moiety-binding region" description="N-palmitoyl cysteine" evidence="2">
    <location>
        <position position="21"/>
    </location>
</feature>
<feature type="lipid moiety-binding region" description="S-diacylglycerol cysteine" evidence="2">
    <location>
        <position position="21"/>
    </location>
</feature>
<name>PRSA_STAAN</name>
<reference key="1">
    <citation type="journal article" date="2001" name="Lancet">
        <title>Whole genome sequencing of meticillin-resistant Staphylococcus aureus.</title>
        <authorList>
            <person name="Kuroda M."/>
            <person name="Ohta T."/>
            <person name="Uchiyama I."/>
            <person name="Baba T."/>
            <person name="Yuzawa H."/>
            <person name="Kobayashi I."/>
            <person name="Cui L."/>
            <person name="Oguchi A."/>
            <person name="Aoki K."/>
            <person name="Nagai Y."/>
            <person name="Lian J.-Q."/>
            <person name="Ito T."/>
            <person name="Kanamori M."/>
            <person name="Matsumaru H."/>
            <person name="Maruyama A."/>
            <person name="Murakami H."/>
            <person name="Hosoyama A."/>
            <person name="Mizutani-Ui Y."/>
            <person name="Takahashi N.K."/>
            <person name="Sawano T."/>
            <person name="Inoue R."/>
            <person name="Kaito C."/>
            <person name="Sekimizu K."/>
            <person name="Hirakawa H."/>
            <person name="Kuhara S."/>
            <person name="Goto S."/>
            <person name="Yabuzaki J."/>
            <person name="Kanehisa M."/>
            <person name="Yamashita A."/>
            <person name="Oshima K."/>
            <person name="Furuya K."/>
            <person name="Yoshino C."/>
            <person name="Shiba T."/>
            <person name="Hattori M."/>
            <person name="Ogasawara N."/>
            <person name="Hayashi H."/>
            <person name="Hiramatsu K."/>
        </authorList>
    </citation>
    <scope>NUCLEOTIDE SEQUENCE [LARGE SCALE GENOMIC DNA]</scope>
    <source>
        <strain>N315</strain>
    </source>
</reference>
<reference key="2">
    <citation type="submission" date="2007-10" db="UniProtKB">
        <title>Shotgun proteomic analysis of total and membrane protein extracts of S. aureus strain N315.</title>
        <authorList>
            <person name="Vaezzadeh A.R."/>
            <person name="Deshusses J."/>
            <person name="Lescuyer P."/>
            <person name="Hochstrasser D.F."/>
        </authorList>
    </citation>
    <scope>IDENTIFICATION BY MASS SPECTROMETRY [LARGE SCALE ANALYSIS]</scope>
    <source>
        <strain>N315</strain>
    </source>
</reference>
<reference key="3">
    <citation type="journal article" date="2010" name="Genes Dev.">
        <title>Functional microdomains in bacterial membranes.</title>
        <authorList>
            <person name="Lopez D."/>
            <person name="Kolter R."/>
        </authorList>
    </citation>
    <scope>IDENTIFICATION BY MASS SPECTROMETRY</scope>
    <scope>SUBCELLULAR LOCATION</scope>
</reference>
<keyword id="KW-1003">Cell membrane</keyword>
<keyword id="KW-0413">Isomerase</keyword>
<keyword id="KW-0449">Lipoprotein</keyword>
<keyword id="KW-0472">Membrane</keyword>
<keyword id="KW-0564">Palmitate</keyword>
<keyword id="KW-0697">Rotamase</keyword>
<keyword id="KW-0732">Signal</keyword>
<protein>
    <recommendedName>
        <fullName evidence="2">Foldase protein PrsA</fullName>
        <ecNumber evidence="2">5.2.1.8</ecNumber>
    </recommendedName>
</protein>
<organism>
    <name type="scientific">Staphylococcus aureus (strain N315)</name>
    <dbReference type="NCBI Taxonomy" id="158879"/>
    <lineage>
        <taxon>Bacteria</taxon>
        <taxon>Bacillati</taxon>
        <taxon>Bacillota</taxon>
        <taxon>Bacilli</taxon>
        <taxon>Bacillales</taxon>
        <taxon>Staphylococcaceae</taxon>
        <taxon>Staphylococcus</taxon>
    </lineage>
</organism>
<proteinExistence type="evidence at protein level"/>
<sequence length="320" mass="35638">MKMINKLIVPVTASALLLGACGASATDSKENTLISSKAGDVTVADTMKKIGKDQIANASFTEMLNKILADKYKNKVNDKKIDEQIEKMQKQYGGKDKFEKALQQQGLTADKYKENLRTAAYHKELLSDKIKISDSEIKEDSKKASHILIKVKSKKSDKEGLDDKEAKQKAEEIQKEVSKDPSKFGEIAKKESMDTGSAKKDGELGYVLKGQTDKDFEKALFKLKDGEVSEVVKSSFGYHIIKADKPTDFNSEKQSLKEKLVDQKVQKNPKLLTDAYKDLLKEYDVDFKDRDIKSVVEDKILNPEKLKQGGAQGGQSGMSQ</sequence>